<reference key="1">
    <citation type="journal article" date="1990" name="Nucleic Acids Res.">
        <title>A cDNA sequence encoding cytoskeletal gamma-actin from rat.</title>
        <authorList>
            <person name="Brown C.W."/>
            <person name="McHugh K.M."/>
            <person name="Lessard J.L."/>
        </authorList>
    </citation>
    <scope>NUCLEOTIDE SEQUENCE [MRNA]</scope>
    <source>
        <tissue>Kidney</tissue>
    </source>
</reference>
<reference key="2">
    <citation type="journal article" date="1990" name="Biochem. Biophys. Res. Commun.">
        <title>A microsequencing approach to identify proteins which appear to interact with thyrotropin in rat FRTL-5 thyroid cells.</title>
        <authorList>
            <person name="Akamizu T."/>
            <person name="Saji M."/>
            <person name="Kohn L.D."/>
        </authorList>
    </citation>
    <scope>PROTEIN SEQUENCE OF 4-19 AND 228-231</scope>
</reference>
<reference key="3">
    <citation type="submission" date="2007-04" db="UniProtKB">
        <authorList>
            <person name="Lubec G."/>
            <person name="Chen W.-Q."/>
        </authorList>
    </citation>
    <scope>PROTEIN SEQUENCE OF 29-37; 51-62 AND 85-95</scope>
    <scope>IDENTIFICATION BY MASS SPECTROMETRY</scope>
    <source>
        <strain>Sprague-Dawley</strain>
        <tissue>Hippocampus</tissue>
    </source>
</reference>
<protein>
    <recommendedName>
        <fullName>Actin, cytoplasmic 2</fullName>
        <ecNumber evidence="4">3.6.4.-</ecNumber>
    </recommendedName>
    <alternativeName>
        <fullName>Gamma-actin</fullName>
    </alternativeName>
    <component>
        <recommendedName>
            <fullName>Actin, cytoplasmic 2, N-terminally processed</fullName>
        </recommendedName>
    </component>
</protein>
<comment type="function">
    <text evidence="2 3">Actins are highly conserved proteins that are involved in various types of cell motility and are ubiquitously expressed in all eukaryotic cells. May play a role in the repair of noise-induced stereocilia gaps thereby maintains hearing sensitivity following loud noise damage (By similarity).</text>
</comment>
<comment type="catalytic activity">
    <reaction evidence="4">
        <text>ATP + H2O = ADP + phosphate + H(+)</text>
        <dbReference type="Rhea" id="RHEA:13065"/>
        <dbReference type="ChEBI" id="CHEBI:15377"/>
        <dbReference type="ChEBI" id="CHEBI:15378"/>
        <dbReference type="ChEBI" id="CHEBI:30616"/>
        <dbReference type="ChEBI" id="CHEBI:43474"/>
        <dbReference type="ChEBI" id="CHEBI:456216"/>
    </reaction>
</comment>
<comment type="subunit">
    <text evidence="3">Polymerization of globular actin (G-actin) leads to a structural filament (F-actin) in the form of a two-stranded helix. Each actin can bind to 4 others. Interacts with TWF1, CAPZB, cofilin and profilin.</text>
</comment>
<comment type="subcellular location">
    <subcellularLocation>
        <location evidence="3">Cytoplasm</location>
        <location evidence="3">Cytoskeleton</location>
    </subcellularLocation>
</comment>
<comment type="PTM">
    <molecule>Actin, cytoplasmic 2</molecule>
    <text evidence="3">N-terminal cleavage of acetylated methionine of immature cytoplasmic actin by ACTMAP.</text>
</comment>
<comment type="PTM">
    <text evidence="2">Oxidation of Met-44 and Met-47 by MICALs (MICAL1, MICAL2 or MICAL3) to form methionine sulfoxide promotes actin filament depolymerization. MICAL1 and MICAL2 produce the (R)-S-oxide form. The (R)-S-oxide form is reverted by MSRB1 and MSRB2, which promote actin repolymerization.</text>
</comment>
<comment type="PTM">
    <text evidence="3">Monomethylation at Lys-84 (K84me1) regulates actin-myosin interaction and actomyosin-dependent processes. Demethylation by ALKBH4 is required for maintaining actomyosin dynamics supporting normal cleavage furrow ingression during cytokinesis and cell migration.</text>
</comment>
<comment type="PTM">
    <molecule>Actin, cytoplasmic 2, N-terminally processed</molecule>
    <text evidence="3">N-terminal acetylation by NAA80 affects actin filament depolymerization and elongation, including elongation driven by formins. In contrast, filament nucleation by the Arp2/3 complex is not affected.</text>
</comment>
<comment type="PTM">
    <text evidence="3">Methylated at His-73 by SETD3.</text>
</comment>
<comment type="miscellaneous">
    <text>In vertebrates 3 main groups of actin isoforms, alpha, beta and gamma have been identified. The alpha actins are found in muscle tissues and are a major constituent of the contractile apparatus. The beta and gamma actins coexist in most cell types as components of the cytoskeleton and as mediators of internal cell motility.</text>
</comment>
<comment type="similarity">
    <text evidence="5">Belongs to the actin family.</text>
</comment>
<proteinExistence type="evidence at protein level"/>
<dbReference type="EC" id="3.6.4.-" evidence="4"/>
<dbReference type="EMBL" id="X52815">
    <property type="protein sequence ID" value="CAA36999.1"/>
    <property type="molecule type" value="mRNA"/>
</dbReference>
<dbReference type="PIR" id="A38571">
    <property type="entry name" value="ATRTC"/>
</dbReference>
<dbReference type="PIR" id="S11222">
    <property type="entry name" value="S11222"/>
</dbReference>
<dbReference type="RefSeq" id="NP_001120921.1">
    <property type="nucleotide sequence ID" value="NM_001127449.1"/>
</dbReference>
<dbReference type="RefSeq" id="XP_002729242.3">
    <property type="nucleotide sequence ID" value="XM_002729196.4"/>
</dbReference>
<dbReference type="RefSeq" id="XP_017452655.1">
    <property type="nucleotide sequence ID" value="XM_017597166.1"/>
</dbReference>
<dbReference type="SMR" id="P63259"/>
<dbReference type="BioGRID" id="252365">
    <property type="interactions" value="3"/>
</dbReference>
<dbReference type="CORUM" id="P63259"/>
<dbReference type="FunCoup" id="P63259">
    <property type="interactions" value="3063"/>
</dbReference>
<dbReference type="IntAct" id="P63259">
    <property type="interactions" value="3"/>
</dbReference>
<dbReference type="STRING" id="10116.ENSRNOP00000051859"/>
<dbReference type="CarbonylDB" id="P63259"/>
<dbReference type="GlyGen" id="P63259">
    <property type="glycosylation" value="1 site, 1 O-linked glycan (1 site)"/>
</dbReference>
<dbReference type="iPTMnet" id="P63259"/>
<dbReference type="PhosphoSitePlus" id="P63259"/>
<dbReference type="jPOST" id="P63259"/>
<dbReference type="Ensembl" id="ENSRNOT00000108494.1">
    <property type="protein sequence ID" value="ENSRNOP00000096150.1"/>
    <property type="gene ID" value="ENSRNOG00000036701.5"/>
</dbReference>
<dbReference type="GeneID" id="287876"/>
<dbReference type="KEGG" id="rno:287876"/>
<dbReference type="AGR" id="RGD:1304556"/>
<dbReference type="AGR" id="RGD:2320108"/>
<dbReference type="CTD" id="71"/>
<dbReference type="RGD" id="1304556">
    <property type="gene designation" value="Actg1"/>
</dbReference>
<dbReference type="GeneTree" id="ENSGT00950000182960"/>
<dbReference type="HOGENOM" id="CLU_027965_0_2_1"/>
<dbReference type="InParanoid" id="P63259"/>
<dbReference type="OrthoDB" id="9546537at2759"/>
<dbReference type="PhylomeDB" id="P63259"/>
<dbReference type="TreeFam" id="TF354237"/>
<dbReference type="Reactome" id="R-RNO-114608">
    <property type="pathway name" value="Platelet degranulation"/>
</dbReference>
<dbReference type="Reactome" id="R-RNO-190873">
    <property type="pathway name" value="Gap junction degradation"/>
</dbReference>
<dbReference type="Reactome" id="R-RNO-196025">
    <property type="pathway name" value="Formation of annular gap junctions"/>
</dbReference>
<dbReference type="Reactome" id="R-RNO-2029482">
    <property type="pathway name" value="Regulation of actin dynamics for phagocytic cup formation"/>
</dbReference>
<dbReference type="Reactome" id="R-RNO-3928662">
    <property type="pathway name" value="EPHB-mediated forward signaling"/>
</dbReference>
<dbReference type="Reactome" id="R-RNO-418990">
    <property type="pathway name" value="Adherens junctions interactions"/>
</dbReference>
<dbReference type="Reactome" id="R-RNO-437239">
    <property type="pathway name" value="Recycling pathway of L1"/>
</dbReference>
<dbReference type="Reactome" id="R-RNO-4420097">
    <property type="pathway name" value="VEGFA-VEGFR2 Pathway"/>
</dbReference>
<dbReference type="Reactome" id="R-RNO-445095">
    <property type="pathway name" value="Interaction between L1 and Ankyrins"/>
</dbReference>
<dbReference type="Reactome" id="R-RNO-446353">
    <property type="pathway name" value="Cell-extracellular matrix interactions"/>
</dbReference>
<dbReference type="Reactome" id="R-RNO-5626467">
    <property type="pathway name" value="RHO GTPases activate IQGAPs"/>
</dbReference>
<dbReference type="Reactome" id="R-RNO-5663213">
    <property type="pathway name" value="RHO GTPases Activate WASPs and WAVEs"/>
</dbReference>
<dbReference type="Reactome" id="R-RNO-5663220">
    <property type="pathway name" value="RHO GTPases Activate Formins"/>
</dbReference>
<dbReference type="Reactome" id="R-RNO-5674135">
    <property type="pathway name" value="MAP2K and MAPK activation"/>
</dbReference>
<dbReference type="Reactome" id="R-RNO-8856828">
    <property type="pathway name" value="Clathrin-mediated endocytosis"/>
</dbReference>
<dbReference type="Reactome" id="R-RNO-9013418">
    <property type="pathway name" value="RHOBTB2 GTPase cycle"/>
</dbReference>
<dbReference type="Reactome" id="R-RNO-9035034">
    <property type="pathway name" value="RHOF GTPase cycle"/>
</dbReference>
<dbReference type="Reactome" id="R-RNO-9913351">
    <property type="pathway name" value="Formation of the dystrophin-glycoprotein complex (DGC)"/>
</dbReference>
<dbReference type="PRO" id="PR:P63259"/>
<dbReference type="Proteomes" id="UP000002494">
    <property type="component" value="Chromosome 10"/>
</dbReference>
<dbReference type="Bgee" id="ENSRNOG00000036701">
    <property type="expression patterns" value="Expressed in frontal cortex and 8 other cell types or tissues"/>
</dbReference>
<dbReference type="GO" id="GO:0015629">
    <property type="term" value="C:actin cytoskeleton"/>
    <property type="evidence" value="ECO:0000266"/>
    <property type="project" value="RGD"/>
</dbReference>
<dbReference type="GO" id="GO:0005884">
    <property type="term" value="C:actin filament"/>
    <property type="evidence" value="ECO:0000266"/>
    <property type="project" value="RGD"/>
</dbReference>
<dbReference type="GO" id="GO:0043296">
    <property type="term" value="C:apical junction complex"/>
    <property type="evidence" value="ECO:0000266"/>
    <property type="project" value="RGD"/>
</dbReference>
<dbReference type="GO" id="GO:0045177">
    <property type="term" value="C:apical part of cell"/>
    <property type="evidence" value="ECO:0000266"/>
    <property type="project" value="RGD"/>
</dbReference>
<dbReference type="GO" id="GO:0030424">
    <property type="term" value="C:axon"/>
    <property type="evidence" value="ECO:0000318"/>
    <property type="project" value="GO_Central"/>
</dbReference>
<dbReference type="GO" id="GO:0120220">
    <property type="term" value="C:basal body patch"/>
    <property type="evidence" value="ECO:0000266"/>
    <property type="project" value="RGD"/>
</dbReference>
<dbReference type="GO" id="GO:0044305">
    <property type="term" value="C:calyx of Held"/>
    <property type="evidence" value="ECO:0000266"/>
    <property type="project" value="RGD"/>
</dbReference>
<dbReference type="GO" id="GO:0005911">
    <property type="term" value="C:cell-cell junction"/>
    <property type="evidence" value="ECO:0000266"/>
    <property type="project" value="RGD"/>
</dbReference>
<dbReference type="GO" id="GO:0005737">
    <property type="term" value="C:cytoplasm"/>
    <property type="evidence" value="ECO:0000318"/>
    <property type="project" value="GO_Central"/>
</dbReference>
<dbReference type="GO" id="GO:0005856">
    <property type="term" value="C:cytoskeleton"/>
    <property type="evidence" value="ECO:0000250"/>
    <property type="project" value="AgBase"/>
</dbReference>
<dbReference type="GO" id="GO:0005829">
    <property type="term" value="C:cytosol"/>
    <property type="evidence" value="ECO:0000304"/>
    <property type="project" value="Reactome"/>
</dbReference>
<dbReference type="GO" id="GO:0097433">
    <property type="term" value="C:dense body"/>
    <property type="evidence" value="ECO:0000250"/>
    <property type="project" value="AgBase"/>
</dbReference>
<dbReference type="GO" id="GO:0070062">
    <property type="term" value="C:extracellular exosome"/>
    <property type="evidence" value="ECO:0000266"/>
    <property type="project" value="RGD"/>
</dbReference>
<dbReference type="GO" id="GO:0031941">
    <property type="term" value="C:filamentous actin"/>
    <property type="evidence" value="ECO:0000266"/>
    <property type="project" value="RGD"/>
</dbReference>
<dbReference type="GO" id="GO:0005925">
    <property type="term" value="C:focal adhesion"/>
    <property type="evidence" value="ECO:0000250"/>
    <property type="project" value="AgBase"/>
</dbReference>
<dbReference type="GO" id="GO:0016020">
    <property type="term" value="C:membrane"/>
    <property type="evidence" value="ECO:0000318"/>
    <property type="project" value="GO_Central"/>
</dbReference>
<dbReference type="GO" id="GO:0030016">
    <property type="term" value="C:myofibril"/>
    <property type="evidence" value="ECO:0000266"/>
    <property type="project" value="RGD"/>
</dbReference>
<dbReference type="GO" id="GO:0035267">
    <property type="term" value="C:NuA4 histone acetyltransferase complex"/>
    <property type="evidence" value="ECO:0000318"/>
    <property type="project" value="GO_Central"/>
</dbReference>
<dbReference type="GO" id="GO:0045335">
    <property type="term" value="C:phagocytic vesicle"/>
    <property type="evidence" value="ECO:0000266"/>
    <property type="project" value="RGD"/>
</dbReference>
<dbReference type="GO" id="GO:0005886">
    <property type="term" value="C:plasma membrane"/>
    <property type="evidence" value="ECO:0000250"/>
    <property type="project" value="AgBase"/>
</dbReference>
<dbReference type="GO" id="GO:0098871">
    <property type="term" value="C:postsynaptic actin cytoskeleton"/>
    <property type="evidence" value="ECO:0000314"/>
    <property type="project" value="SynGO"/>
</dbReference>
<dbReference type="GO" id="GO:0099143">
    <property type="term" value="C:presynaptic actin cytoskeleton"/>
    <property type="evidence" value="ECO:0000314"/>
    <property type="project" value="SynGO"/>
</dbReference>
<dbReference type="GO" id="GO:0098685">
    <property type="term" value="C:Schaffer collateral - CA1 synapse"/>
    <property type="evidence" value="ECO:0000266"/>
    <property type="project" value="RGD"/>
</dbReference>
<dbReference type="GO" id="GO:0045202">
    <property type="term" value="C:synapse"/>
    <property type="evidence" value="ECO:0000318"/>
    <property type="project" value="GO_Central"/>
</dbReference>
<dbReference type="GO" id="GO:0005524">
    <property type="term" value="F:ATP binding"/>
    <property type="evidence" value="ECO:0007669"/>
    <property type="project" value="UniProtKB-KW"/>
</dbReference>
<dbReference type="GO" id="GO:0016787">
    <property type="term" value="F:hydrolase activity"/>
    <property type="evidence" value="ECO:0007669"/>
    <property type="project" value="UniProtKB-KW"/>
</dbReference>
<dbReference type="GO" id="GO:0042802">
    <property type="term" value="F:identical protein binding"/>
    <property type="evidence" value="ECO:0000266"/>
    <property type="project" value="RGD"/>
</dbReference>
<dbReference type="GO" id="GO:0005522">
    <property type="term" value="F:profilin binding"/>
    <property type="evidence" value="ECO:0000266"/>
    <property type="project" value="RGD"/>
</dbReference>
<dbReference type="GO" id="GO:0019901">
    <property type="term" value="F:protein kinase binding"/>
    <property type="evidence" value="ECO:0000318"/>
    <property type="project" value="GO_Central"/>
</dbReference>
<dbReference type="GO" id="GO:0005200">
    <property type="term" value="F:structural constituent of cytoskeleton"/>
    <property type="evidence" value="ECO:0000266"/>
    <property type="project" value="RGD"/>
</dbReference>
<dbReference type="GO" id="GO:0098973">
    <property type="term" value="F:structural constituent of postsynaptic actin cytoskeleton"/>
    <property type="evidence" value="ECO:0000314"/>
    <property type="project" value="SynGO"/>
</dbReference>
<dbReference type="GO" id="GO:0031625">
    <property type="term" value="F:ubiquitin protein ligase binding"/>
    <property type="evidence" value="ECO:0000266"/>
    <property type="project" value="RGD"/>
</dbReference>
<dbReference type="GO" id="GO:0001525">
    <property type="term" value="P:angiogenesis"/>
    <property type="evidence" value="ECO:0000266"/>
    <property type="project" value="RGD"/>
</dbReference>
<dbReference type="GO" id="GO:0007409">
    <property type="term" value="P:axonogenesis"/>
    <property type="evidence" value="ECO:0000318"/>
    <property type="project" value="GO_Central"/>
</dbReference>
<dbReference type="GO" id="GO:0048870">
    <property type="term" value="P:cell motility"/>
    <property type="evidence" value="ECO:0000318"/>
    <property type="project" value="GO_Central"/>
</dbReference>
<dbReference type="GO" id="GO:0071346">
    <property type="term" value="P:cellular response to type II interferon"/>
    <property type="evidence" value="ECO:0000266"/>
    <property type="project" value="RGD"/>
</dbReference>
<dbReference type="GO" id="GO:0001738">
    <property type="term" value="P:morphogenesis of a polarized epithelium"/>
    <property type="evidence" value="ECO:0000266"/>
    <property type="project" value="RGD"/>
</dbReference>
<dbReference type="GO" id="GO:0030335">
    <property type="term" value="P:positive regulation of cell migration"/>
    <property type="evidence" value="ECO:0000266"/>
    <property type="project" value="RGD"/>
</dbReference>
<dbReference type="GO" id="GO:0010628">
    <property type="term" value="P:positive regulation of gene expression"/>
    <property type="evidence" value="ECO:0000266"/>
    <property type="project" value="RGD"/>
</dbReference>
<dbReference type="GO" id="GO:0090303">
    <property type="term" value="P:positive regulation of wound healing"/>
    <property type="evidence" value="ECO:0000266"/>
    <property type="project" value="RGD"/>
</dbReference>
<dbReference type="GO" id="GO:1902396">
    <property type="term" value="P:protein localization to bicellular tight junction"/>
    <property type="evidence" value="ECO:0000266"/>
    <property type="project" value="RGD"/>
</dbReference>
<dbReference type="GO" id="GO:0051893">
    <property type="term" value="P:regulation of focal adhesion assembly"/>
    <property type="evidence" value="ECO:0000266"/>
    <property type="project" value="RGD"/>
</dbReference>
<dbReference type="GO" id="GO:0051492">
    <property type="term" value="P:regulation of stress fiber assembly"/>
    <property type="evidence" value="ECO:0000266"/>
    <property type="project" value="RGD"/>
</dbReference>
<dbReference type="GO" id="GO:1900242">
    <property type="term" value="P:regulation of synaptic vesicle endocytosis"/>
    <property type="evidence" value="ECO:0000266"/>
    <property type="project" value="RGD"/>
</dbReference>
<dbReference type="GO" id="GO:0150111">
    <property type="term" value="P:regulation of transepithelial transport"/>
    <property type="evidence" value="ECO:0000266"/>
    <property type="project" value="RGD"/>
</dbReference>
<dbReference type="GO" id="GO:0051592">
    <property type="term" value="P:response to calcium ion"/>
    <property type="evidence" value="ECO:0000270"/>
    <property type="project" value="RGD"/>
</dbReference>
<dbReference type="GO" id="GO:0009612">
    <property type="term" value="P:response to mechanical stimulus"/>
    <property type="evidence" value="ECO:0000270"/>
    <property type="project" value="RGD"/>
</dbReference>
<dbReference type="GO" id="GO:0045214">
    <property type="term" value="P:sarcomere organization"/>
    <property type="evidence" value="ECO:0000266"/>
    <property type="project" value="RGD"/>
</dbReference>
<dbReference type="GO" id="GO:0120192">
    <property type="term" value="P:tight junction assembly"/>
    <property type="evidence" value="ECO:0000266"/>
    <property type="project" value="RGD"/>
</dbReference>
<dbReference type="CDD" id="cd10224">
    <property type="entry name" value="ASKHA_NBD_actin"/>
    <property type="match status" value="1"/>
</dbReference>
<dbReference type="FunFam" id="3.30.420.40:FF:000131">
    <property type="entry name" value="Actin, alpha skeletal muscle"/>
    <property type="match status" value="1"/>
</dbReference>
<dbReference type="FunFam" id="3.30.420.40:FF:000291">
    <property type="entry name" value="Actin, alpha skeletal muscle"/>
    <property type="match status" value="1"/>
</dbReference>
<dbReference type="FunFam" id="3.90.640.10:FF:000047">
    <property type="entry name" value="Actin, alpha skeletal muscle"/>
    <property type="match status" value="1"/>
</dbReference>
<dbReference type="FunFam" id="3.30.420.40:FF:000058">
    <property type="entry name" value="Putative actin-related protein 5"/>
    <property type="match status" value="1"/>
</dbReference>
<dbReference type="Gene3D" id="3.30.420.40">
    <property type="match status" value="2"/>
</dbReference>
<dbReference type="Gene3D" id="3.90.640.10">
    <property type="entry name" value="Actin, Chain A, domain 4"/>
    <property type="match status" value="1"/>
</dbReference>
<dbReference type="InterPro" id="IPR004000">
    <property type="entry name" value="Actin"/>
</dbReference>
<dbReference type="InterPro" id="IPR020902">
    <property type="entry name" value="Actin/actin-like_CS"/>
</dbReference>
<dbReference type="InterPro" id="IPR004001">
    <property type="entry name" value="Actin_CS"/>
</dbReference>
<dbReference type="InterPro" id="IPR043129">
    <property type="entry name" value="ATPase_NBD"/>
</dbReference>
<dbReference type="PANTHER" id="PTHR11937">
    <property type="entry name" value="ACTIN"/>
    <property type="match status" value="1"/>
</dbReference>
<dbReference type="Pfam" id="PF00022">
    <property type="entry name" value="Actin"/>
    <property type="match status" value="1"/>
</dbReference>
<dbReference type="PRINTS" id="PR00190">
    <property type="entry name" value="ACTIN"/>
</dbReference>
<dbReference type="SMART" id="SM00268">
    <property type="entry name" value="ACTIN"/>
    <property type="match status" value="1"/>
</dbReference>
<dbReference type="SUPFAM" id="SSF53067">
    <property type="entry name" value="Actin-like ATPase domain"/>
    <property type="match status" value="2"/>
</dbReference>
<dbReference type="PROSITE" id="PS00406">
    <property type="entry name" value="ACTINS_1"/>
    <property type="match status" value="1"/>
</dbReference>
<dbReference type="PROSITE" id="PS00432">
    <property type="entry name" value="ACTINS_2"/>
    <property type="match status" value="1"/>
</dbReference>
<dbReference type="PROSITE" id="PS01132">
    <property type="entry name" value="ACTINS_ACT_LIKE"/>
    <property type="match status" value="1"/>
</dbReference>
<sequence>MEEEIAALVIDNGSGMCKAGFAGDDAPRAVFPSIVGRPRHQGVMVGMGQKDSYVGDEAQSKRGILTLKYPIEHGIVTNWDDMEKIWHHTFYNELRVAPEEHPVLLTEAPLNPKANREKMTQIMFETFNTPAMYVAIQAVLSLYASGRTTGIVMDSGDGVTHTVPIYEGYALPHAILRLDLAGRDLTDYLMKILTERGYSFTTTAEREIVRDIKEKLCYVALDFEQEMATAASSSSLEKSYELPDGQVITIGNERFRCPEALFQPSFLGMESCGIHETTFNSIMKCDVDIRKDLYANTVLSGGTTMYPGIADRMQKEITALAPSTMKIKIIAPPERKYSVWIGGSILASLSTFQQMWISKQEYDESGPSIVHRKCF</sequence>
<accession>P63259</accession>
<accession>P02571</accession>
<accession>P14104</accession>
<accession>P99022</accession>
<name>ACTG_RAT</name>
<gene>
    <name type="primary">Actg1</name>
    <name type="synonym">Actg</name>
</gene>
<feature type="chain" id="PRO_0000000835" description="Actin, cytoplasmic 2">
    <location>
        <begin position="1"/>
        <end position="375"/>
    </location>
</feature>
<feature type="initiator methionine" description="Removed; alternate" evidence="3">
    <location>
        <position position="1"/>
    </location>
</feature>
<feature type="chain" id="PRO_0000367102" description="Actin, cytoplasmic 2, N-terminally processed">
    <location>
        <begin position="2"/>
        <end position="375"/>
    </location>
</feature>
<feature type="modified residue" description="N-acetylmethionine" evidence="3">
    <location>
        <position position="1"/>
    </location>
</feature>
<feature type="modified residue" description="N-acetylglutamate; in Actin, cytoplasmic 2, N-terminally processed" evidence="3">
    <location>
        <position position="2"/>
    </location>
</feature>
<feature type="modified residue" description="Methionine (R)-sulfoxide" evidence="2">
    <location>
        <position position="44"/>
    </location>
</feature>
<feature type="modified residue" description="Methionine (R)-sulfoxide" evidence="2">
    <location>
        <position position="47"/>
    </location>
</feature>
<feature type="modified residue" description="Tele-methylhistidine" evidence="1">
    <location>
        <position position="73"/>
    </location>
</feature>
<feature type="modified residue" description="N6-methyllysine" evidence="3">
    <location>
        <position position="84"/>
    </location>
</feature>
<keyword id="KW-0007">Acetylation</keyword>
<keyword id="KW-0067">ATP-binding</keyword>
<keyword id="KW-0963">Cytoplasm</keyword>
<keyword id="KW-0206">Cytoskeleton</keyword>
<keyword id="KW-0903">Direct protein sequencing</keyword>
<keyword id="KW-0378">Hydrolase</keyword>
<keyword id="KW-0488">Methylation</keyword>
<keyword id="KW-0547">Nucleotide-binding</keyword>
<keyword id="KW-0558">Oxidation</keyword>
<keyword id="KW-1185">Reference proteome</keyword>
<evidence type="ECO:0000250" key="1">
    <source>
        <dbReference type="UniProtKB" id="P63258"/>
    </source>
</evidence>
<evidence type="ECO:0000250" key="2">
    <source>
        <dbReference type="UniProtKB" id="P63260"/>
    </source>
</evidence>
<evidence type="ECO:0000250" key="3">
    <source>
        <dbReference type="UniProtKB" id="P63261"/>
    </source>
</evidence>
<evidence type="ECO:0000250" key="4">
    <source>
        <dbReference type="UniProtKB" id="P68137"/>
    </source>
</evidence>
<evidence type="ECO:0000305" key="5"/>
<organism>
    <name type="scientific">Rattus norvegicus</name>
    <name type="common">Rat</name>
    <dbReference type="NCBI Taxonomy" id="10116"/>
    <lineage>
        <taxon>Eukaryota</taxon>
        <taxon>Metazoa</taxon>
        <taxon>Chordata</taxon>
        <taxon>Craniata</taxon>
        <taxon>Vertebrata</taxon>
        <taxon>Euteleostomi</taxon>
        <taxon>Mammalia</taxon>
        <taxon>Eutheria</taxon>
        <taxon>Euarchontoglires</taxon>
        <taxon>Glires</taxon>
        <taxon>Rodentia</taxon>
        <taxon>Myomorpha</taxon>
        <taxon>Muroidea</taxon>
        <taxon>Muridae</taxon>
        <taxon>Murinae</taxon>
        <taxon>Rattus</taxon>
    </lineage>
</organism>